<gene>
    <name evidence="1" type="primary">nuoK</name>
    <name type="ordered locus">BRADO4174</name>
</gene>
<accession>A4YVK0</accession>
<protein>
    <recommendedName>
        <fullName evidence="1">NADH-quinone oxidoreductase subunit K</fullName>
        <ecNumber evidence="1">7.1.1.-</ecNumber>
    </recommendedName>
    <alternativeName>
        <fullName evidence="1">NADH dehydrogenase I subunit K</fullName>
    </alternativeName>
    <alternativeName>
        <fullName evidence="1">NDH-1 subunit K</fullName>
    </alternativeName>
</protein>
<reference key="1">
    <citation type="journal article" date="2007" name="Science">
        <title>Legumes symbioses: absence of nod genes in photosynthetic bradyrhizobia.</title>
        <authorList>
            <person name="Giraud E."/>
            <person name="Moulin L."/>
            <person name="Vallenet D."/>
            <person name="Barbe V."/>
            <person name="Cytryn E."/>
            <person name="Avarre J.-C."/>
            <person name="Jaubert M."/>
            <person name="Simon D."/>
            <person name="Cartieaux F."/>
            <person name="Prin Y."/>
            <person name="Bena G."/>
            <person name="Hannibal L."/>
            <person name="Fardoux J."/>
            <person name="Kojadinovic M."/>
            <person name="Vuillet L."/>
            <person name="Lajus A."/>
            <person name="Cruveiller S."/>
            <person name="Rouy Z."/>
            <person name="Mangenot S."/>
            <person name="Segurens B."/>
            <person name="Dossat C."/>
            <person name="Franck W.L."/>
            <person name="Chang W.-S."/>
            <person name="Saunders E."/>
            <person name="Bruce D."/>
            <person name="Richardson P."/>
            <person name="Normand P."/>
            <person name="Dreyfus B."/>
            <person name="Pignol D."/>
            <person name="Stacey G."/>
            <person name="Emerich D."/>
            <person name="Vermeglio A."/>
            <person name="Medigue C."/>
            <person name="Sadowsky M."/>
        </authorList>
    </citation>
    <scope>NUCLEOTIDE SEQUENCE [LARGE SCALE GENOMIC DNA]</scope>
    <source>
        <strain>ORS 278</strain>
    </source>
</reference>
<keyword id="KW-0997">Cell inner membrane</keyword>
<keyword id="KW-1003">Cell membrane</keyword>
<keyword id="KW-0472">Membrane</keyword>
<keyword id="KW-0520">NAD</keyword>
<keyword id="KW-0874">Quinone</keyword>
<keyword id="KW-1185">Reference proteome</keyword>
<keyword id="KW-1278">Translocase</keyword>
<keyword id="KW-0812">Transmembrane</keyword>
<keyword id="KW-1133">Transmembrane helix</keyword>
<keyword id="KW-0813">Transport</keyword>
<keyword id="KW-0830">Ubiquinone</keyword>
<proteinExistence type="inferred from homology"/>
<evidence type="ECO:0000255" key="1">
    <source>
        <dbReference type="HAMAP-Rule" id="MF_01456"/>
    </source>
</evidence>
<sequence length="102" mass="10817">MTIGLGHYLAVAAMLFTLGILGIFLNRKNIIVILMSVELILLAVNINLVAFSTFLGDIVGQVFALLVLTVAAAEAAIGLAVLVVYFRNRGSIAVEDVNLMKG</sequence>
<comment type="function">
    <text evidence="1">NDH-1 shuttles electrons from NADH, via FMN and iron-sulfur (Fe-S) centers, to quinones in the respiratory chain. The immediate electron acceptor for the enzyme in this species is believed to be ubiquinone. Couples the redox reaction to proton translocation (for every two electrons transferred, four hydrogen ions are translocated across the cytoplasmic membrane), and thus conserves the redox energy in a proton gradient.</text>
</comment>
<comment type="catalytic activity">
    <reaction evidence="1">
        <text>a quinone + NADH + 5 H(+)(in) = a quinol + NAD(+) + 4 H(+)(out)</text>
        <dbReference type="Rhea" id="RHEA:57888"/>
        <dbReference type="ChEBI" id="CHEBI:15378"/>
        <dbReference type="ChEBI" id="CHEBI:24646"/>
        <dbReference type="ChEBI" id="CHEBI:57540"/>
        <dbReference type="ChEBI" id="CHEBI:57945"/>
        <dbReference type="ChEBI" id="CHEBI:132124"/>
    </reaction>
</comment>
<comment type="subunit">
    <text evidence="1">NDH-1 is composed of 14 different subunits. Subunits NuoA, H, J, K, L, M, N constitute the membrane sector of the complex.</text>
</comment>
<comment type="subcellular location">
    <subcellularLocation>
        <location evidence="1">Cell inner membrane</location>
        <topology evidence="1">Multi-pass membrane protein</topology>
    </subcellularLocation>
</comment>
<comment type="similarity">
    <text evidence="1">Belongs to the complex I subunit 4L family.</text>
</comment>
<organism>
    <name type="scientific">Bradyrhizobium sp. (strain ORS 278)</name>
    <dbReference type="NCBI Taxonomy" id="114615"/>
    <lineage>
        <taxon>Bacteria</taxon>
        <taxon>Pseudomonadati</taxon>
        <taxon>Pseudomonadota</taxon>
        <taxon>Alphaproteobacteria</taxon>
        <taxon>Hyphomicrobiales</taxon>
        <taxon>Nitrobacteraceae</taxon>
        <taxon>Bradyrhizobium</taxon>
    </lineage>
</organism>
<dbReference type="EC" id="7.1.1.-" evidence="1"/>
<dbReference type="EMBL" id="CU234118">
    <property type="protein sequence ID" value="CAL77926.1"/>
    <property type="molecule type" value="Genomic_DNA"/>
</dbReference>
<dbReference type="RefSeq" id="WP_006611001.1">
    <property type="nucleotide sequence ID" value="NC_009445.1"/>
</dbReference>
<dbReference type="SMR" id="A4YVK0"/>
<dbReference type="STRING" id="114615.BRADO4174"/>
<dbReference type="KEGG" id="bra:BRADO4174"/>
<dbReference type="eggNOG" id="COG0713">
    <property type="taxonomic scope" value="Bacteria"/>
</dbReference>
<dbReference type="HOGENOM" id="CLU_144724_2_0_5"/>
<dbReference type="OrthoDB" id="9811124at2"/>
<dbReference type="Proteomes" id="UP000001994">
    <property type="component" value="Chromosome"/>
</dbReference>
<dbReference type="GO" id="GO:0030964">
    <property type="term" value="C:NADH dehydrogenase complex"/>
    <property type="evidence" value="ECO:0007669"/>
    <property type="project" value="TreeGrafter"/>
</dbReference>
<dbReference type="GO" id="GO:0005886">
    <property type="term" value="C:plasma membrane"/>
    <property type="evidence" value="ECO:0007669"/>
    <property type="project" value="UniProtKB-SubCell"/>
</dbReference>
<dbReference type="GO" id="GO:0050136">
    <property type="term" value="F:NADH:ubiquinone reductase (non-electrogenic) activity"/>
    <property type="evidence" value="ECO:0007669"/>
    <property type="project" value="UniProtKB-UniRule"/>
</dbReference>
<dbReference type="GO" id="GO:0048038">
    <property type="term" value="F:quinone binding"/>
    <property type="evidence" value="ECO:0007669"/>
    <property type="project" value="UniProtKB-KW"/>
</dbReference>
<dbReference type="GO" id="GO:0042773">
    <property type="term" value="P:ATP synthesis coupled electron transport"/>
    <property type="evidence" value="ECO:0007669"/>
    <property type="project" value="InterPro"/>
</dbReference>
<dbReference type="FunFam" id="1.10.287.3510:FF:000001">
    <property type="entry name" value="NADH-quinone oxidoreductase subunit K"/>
    <property type="match status" value="1"/>
</dbReference>
<dbReference type="Gene3D" id="1.10.287.3510">
    <property type="match status" value="1"/>
</dbReference>
<dbReference type="HAMAP" id="MF_01456">
    <property type="entry name" value="NDH1_NuoK"/>
    <property type="match status" value="1"/>
</dbReference>
<dbReference type="InterPro" id="IPR001133">
    <property type="entry name" value="NADH_UbQ_OxRdtase_chain4L/K"/>
</dbReference>
<dbReference type="InterPro" id="IPR039428">
    <property type="entry name" value="NUOK/Mnh_C1-like"/>
</dbReference>
<dbReference type="NCBIfam" id="NF004320">
    <property type="entry name" value="PRK05715.1-2"/>
    <property type="match status" value="1"/>
</dbReference>
<dbReference type="NCBIfam" id="NF004321">
    <property type="entry name" value="PRK05715.1-3"/>
    <property type="match status" value="1"/>
</dbReference>
<dbReference type="NCBIfam" id="NF004323">
    <property type="entry name" value="PRK05715.1-5"/>
    <property type="match status" value="1"/>
</dbReference>
<dbReference type="PANTHER" id="PTHR11434:SF21">
    <property type="entry name" value="NADH DEHYDROGENASE SUBUNIT 4L-RELATED"/>
    <property type="match status" value="1"/>
</dbReference>
<dbReference type="PANTHER" id="PTHR11434">
    <property type="entry name" value="NADH-UBIQUINONE OXIDOREDUCTASE SUBUNIT ND4L"/>
    <property type="match status" value="1"/>
</dbReference>
<dbReference type="Pfam" id="PF00420">
    <property type="entry name" value="Oxidored_q2"/>
    <property type="match status" value="1"/>
</dbReference>
<name>NUOK_BRASO</name>
<feature type="chain" id="PRO_0000389968" description="NADH-quinone oxidoreductase subunit K">
    <location>
        <begin position="1"/>
        <end position="102"/>
    </location>
</feature>
<feature type="transmembrane region" description="Helical" evidence="1">
    <location>
        <begin position="5"/>
        <end position="25"/>
    </location>
</feature>
<feature type="transmembrane region" description="Helical" evidence="1">
    <location>
        <begin position="30"/>
        <end position="50"/>
    </location>
</feature>
<feature type="transmembrane region" description="Helical" evidence="1">
    <location>
        <begin position="62"/>
        <end position="82"/>
    </location>
</feature>